<reference key="1">
    <citation type="journal article" date="2005" name="Science">
        <title>The genome of the basidiomycetous yeast and human pathogen Cryptococcus neoformans.</title>
        <authorList>
            <person name="Loftus B.J."/>
            <person name="Fung E."/>
            <person name="Roncaglia P."/>
            <person name="Rowley D."/>
            <person name="Amedeo P."/>
            <person name="Bruno D."/>
            <person name="Vamathevan J."/>
            <person name="Miranda M."/>
            <person name="Anderson I.J."/>
            <person name="Fraser J.A."/>
            <person name="Allen J.E."/>
            <person name="Bosdet I.E."/>
            <person name="Brent M.R."/>
            <person name="Chiu R."/>
            <person name="Doering T.L."/>
            <person name="Donlin M.J."/>
            <person name="D'Souza C.A."/>
            <person name="Fox D.S."/>
            <person name="Grinberg V."/>
            <person name="Fu J."/>
            <person name="Fukushima M."/>
            <person name="Haas B.J."/>
            <person name="Huang J.C."/>
            <person name="Janbon G."/>
            <person name="Jones S.J.M."/>
            <person name="Koo H.L."/>
            <person name="Krzywinski M.I."/>
            <person name="Kwon-Chung K.J."/>
            <person name="Lengeler K.B."/>
            <person name="Maiti R."/>
            <person name="Marra M.A."/>
            <person name="Marra R.E."/>
            <person name="Mathewson C.A."/>
            <person name="Mitchell T.G."/>
            <person name="Pertea M."/>
            <person name="Riggs F.R."/>
            <person name="Salzberg S.L."/>
            <person name="Schein J.E."/>
            <person name="Shvartsbeyn A."/>
            <person name="Shin H."/>
            <person name="Shumway M."/>
            <person name="Specht C.A."/>
            <person name="Suh B.B."/>
            <person name="Tenney A."/>
            <person name="Utterback T.R."/>
            <person name="Wickes B.L."/>
            <person name="Wortman J.R."/>
            <person name="Wye N.H."/>
            <person name="Kronstad J.W."/>
            <person name="Lodge J.K."/>
            <person name="Heitman J."/>
            <person name="Davis R.W."/>
            <person name="Fraser C.M."/>
            <person name="Hyman R.W."/>
        </authorList>
    </citation>
    <scope>NUCLEOTIDE SEQUENCE [LARGE SCALE GENOMIC DNA]</scope>
    <source>
        <strain>JEC21 / ATCC MYA-565</strain>
    </source>
</reference>
<feature type="chain" id="PRO_0000285312" description="DNA damage-inducible protein 1">
    <location>
        <begin position="1"/>
        <end position="434"/>
    </location>
</feature>
<feature type="domain" description="Ubiquitin-like">
    <location>
        <begin position="1"/>
        <end position="77"/>
    </location>
</feature>
<feature type="domain" description="UBA" evidence="4">
    <location>
        <begin position="395"/>
        <end position="434"/>
    </location>
</feature>
<feature type="region of interest" description="Disordered" evidence="5">
    <location>
        <begin position="315"/>
        <end position="396"/>
    </location>
</feature>
<feature type="compositionally biased region" description="Basic and acidic residues" evidence="5">
    <location>
        <begin position="315"/>
        <end position="325"/>
    </location>
</feature>
<feature type="compositionally biased region" description="Low complexity" evidence="5">
    <location>
        <begin position="368"/>
        <end position="388"/>
    </location>
</feature>
<feature type="active site" evidence="6">
    <location>
        <position position="212"/>
    </location>
</feature>
<protein>
    <recommendedName>
        <fullName>DNA damage-inducible protein 1</fullName>
        <ecNumber evidence="2">3.4.23.-</ecNumber>
    </recommendedName>
</protein>
<dbReference type="EC" id="3.4.23.-" evidence="2"/>
<dbReference type="EMBL" id="AE017343">
    <property type="protein sequence ID" value="AAW42029.1"/>
    <property type="molecule type" value="Genomic_DNA"/>
</dbReference>
<dbReference type="RefSeq" id="XP_569336.1">
    <property type="nucleotide sequence ID" value="XM_569336.1"/>
</dbReference>
<dbReference type="SMR" id="P0CS14"/>
<dbReference type="FunCoup" id="P0CS14">
    <property type="interactions" value="135"/>
</dbReference>
<dbReference type="STRING" id="214684.P0CS14"/>
<dbReference type="PaxDb" id="214684-P0CS14"/>
<dbReference type="EnsemblFungi" id="AAW42029">
    <property type="protein sequence ID" value="AAW42029"/>
    <property type="gene ID" value="CNC00460"/>
</dbReference>
<dbReference type="GeneID" id="3256457"/>
<dbReference type="KEGG" id="cne:CNC00460"/>
<dbReference type="VEuPathDB" id="FungiDB:CNC00460"/>
<dbReference type="eggNOG" id="KOG0012">
    <property type="taxonomic scope" value="Eukaryota"/>
</dbReference>
<dbReference type="HOGENOM" id="CLU_020435_2_0_1"/>
<dbReference type="InParanoid" id="P0CS14"/>
<dbReference type="OMA" id="GHRLNAF"/>
<dbReference type="OrthoDB" id="1047367at2759"/>
<dbReference type="Proteomes" id="UP000002149">
    <property type="component" value="Chromosome 3"/>
</dbReference>
<dbReference type="GO" id="GO:0005737">
    <property type="term" value="C:cytoplasm"/>
    <property type="evidence" value="ECO:0007669"/>
    <property type="project" value="UniProtKB-SubCell"/>
</dbReference>
<dbReference type="GO" id="GO:0004190">
    <property type="term" value="F:aspartic-type endopeptidase activity"/>
    <property type="evidence" value="ECO:0007669"/>
    <property type="project" value="UniProtKB-KW"/>
</dbReference>
<dbReference type="GO" id="GO:0015031">
    <property type="term" value="P:protein transport"/>
    <property type="evidence" value="ECO:0007669"/>
    <property type="project" value="UniProtKB-KW"/>
</dbReference>
<dbReference type="GO" id="GO:0006508">
    <property type="term" value="P:proteolysis"/>
    <property type="evidence" value="ECO:0007669"/>
    <property type="project" value="UniProtKB-KW"/>
</dbReference>
<dbReference type="CDD" id="cd05479">
    <property type="entry name" value="RP_DDI"/>
    <property type="match status" value="1"/>
</dbReference>
<dbReference type="CDD" id="cd14310">
    <property type="entry name" value="UBA_cnDdi1_like"/>
    <property type="match status" value="1"/>
</dbReference>
<dbReference type="Gene3D" id="2.40.70.10">
    <property type="entry name" value="Acid Proteases"/>
    <property type="match status" value="1"/>
</dbReference>
<dbReference type="Gene3D" id="1.10.8.10">
    <property type="entry name" value="DNA helicase RuvA subunit, C-terminal domain"/>
    <property type="match status" value="1"/>
</dbReference>
<dbReference type="InterPro" id="IPR019103">
    <property type="entry name" value="Peptidase_aspartic_DDI1-type"/>
</dbReference>
<dbReference type="InterPro" id="IPR021109">
    <property type="entry name" value="Peptidase_aspartic_dom_sf"/>
</dbReference>
<dbReference type="InterPro" id="IPR015940">
    <property type="entry name" value="UBA"/>
</dbReference>
<dbReference type="InterPro" id="IPR009060">
    <property type="entry name" value="UBA-like_sf"/>
</dbReference>
<dbReference type="InterPro" id="IPR029071">
    <property type="entry name" value="Ubiquitin-like_domsf"/>
</dbReference>
<dbReference type="PANTHER" id="PTHR12917">
    <property type="entry name" value="ASPARTYL PROTEASE DDI-RELATED"/>
    <property type="match status" value="1"/>
</dbReference>
<dbReference type="PANTHER" id="PTHR12917:SF1">
    <property type="entry name" value="AT13091P"/>
    <property type="match status" value="1"/>
</dbReference>
<dbReference type="Pfam" id="PF09668">
    <property type="entry name" value="Asp_protease"/>
    <property type="match status" value="1"/>
</dbReference>
<dbReference type="Pfam" id="PF00627">
    <property type="entry name" value="UBA"/>
    <property type="match status" value="1"/>
</dbReference>
<dbReference type="SMART" id="SM00165">
    <property type="entry name" value="UBA"/>
    <property type="match status" value="1"/>
</dbReference>
<dbReference type="SUPFAM" id="SSF50630">
    <property type="entry name" value="Acid proteases"/>
    <property type="match status" value="1"/>
</dbReference>
<dbReference type="SUPFAM" id="SSF46934">
    <property type="entry name" value="UBA-like"/>
    <property type="match status" value="1"/>
</dbReference>
<dbReference type="SUPFAM" id="SSF54236">
    <property type="entry name" value="Ubiquitin-like"/>
    <property type="match status" value="1"/>
</dbReference>
<dbReference type="PROSITE" id="PS50030">
    <property type="entry name" value="UBA"/>
    <property type="match status" value="1"/>
</dbReference>
<evidence type="ECO:0000250" key="1"/>
<evidence type="ECO:0000250" key="2">
    <source>
        <dbReference type="UniProtKB" id="I7HUG0"/>
    </source>
</evidence>
<evidence type="ECO:0000250" key="3">
    <source>
        <dbReference type="UniProtKB" id="P40087"/>
    </source>
</evidence>
<evidence type="ECO:0000255" key="4">
    <source>
        <dbReference type="PROSITE-ProRule" id="PRU00212"/>
    </source>
</evidence>
<evidence type="ECO:0000256" key="5">
    <source>
        <dbReference type="SAM" id="MobiDB-lite"/>
    </source>
</evidence>
<evidence type="ECO:0000305" key="6"/>
<sequence length="434" mass="46131">MRLTIIAPDSVHEHEVSPSLLIQDIINIVEATADLPPAVIVLTSDAGTPLTDPTRTLESYGLNGETATIFLTPTGPPVASSSSIPFPDADADIERMRLQALGNPSLMNDLRERDPETFAAIQGGTQSFKKALQLAQSRQRDAEFEKQRQIEALNADPYDIEAQKKIEEAIRMEAVLENMQHAMEYSPESFGNVTMLYINVEVNGHPVKAFVDSGAQTTIISPECAEQCGIMRLLDTRFAGMAEGVGTARILGRIHSAQIKLGSLYLPCAFSVLEGRSVDLLFGLDMLKRHQCCIDLSTNTLRINNTEVPFLSEHELPDKARRRGEAQVAGEMGDAAGQGVKAGVASPKIGKKTFPGEGHALGAGSSTGPGTATGSASATGARTGGTASVPSPSNRWKEDDIQTLVNLGAPRAQAIQLLEASGGNVDVAASMLFG</sequence>
<organism>
    <name type="scientific">Cryptococcus neoformans var. neoformans serotype D (strain JEC21 / ATCC MYA-565)</name>
    <name type="common">Filobasidiella neoformans</name>
    <dbReference type="NCBI Taxonomy" id="214684"/>
    <lineage>
        <taxon>Eukaryota</taxon>
        <taxon>Fungi</taxon>
        <taxon>Dikarya</taxon>
        <taxon>Basidiomycota</taxon>
        <taxon>Agaricomycotina</taxon>
        <taxon>Tremellomycetes</taxon>
        <taxon>Tremellales</taxon>
        <taxon>Cryptococcaceae</taxon>
        <taxon>Cryptococcus</taxon>
        <taxon>Cryptococcus neoformans species complex</taxon>
    </lineage>
</organism>
<keyword id="KW-0064">Aspartyl protease</keyword>
<keyword id="KW-0963">Cytoplasm</keyword>
<keyword id="KW-0378">Hydrolase</keyword>
<keyword id="KW-0645">Protease</keyword>
<keyword id="KW-0653">Protein transport</keyword>
<keyword id="KW-1185">Reference proteome</keyword>
<keyword id="KW-0813">Transport</keyword>
<accession>P0CS14</accession>
<accession>Q55V04</accession>
<accession>Q5KL78</accession>
<proteinExistence type="inferred from homology"/>
<name>DDI1_CRYNJ</name>
<gene>
    <name type="primary">DDI1</name>
    <name type="ordered locus">CNC00460</name>
</gene>
<comment type="function">
    <text evidence="2 3">Probable aspartic protease. May be involved in the regulation of exocytosis. Acts as a linker between the 19S proteasome and polyubiquitinated proteins via UBA domain interactions with ubiquitin for their subsequent degradation. Required for S-phase checkpoint control.</text>
</comment>
<comment type="subunit">
    <text evidence="1">Binds ubiquitin and polyubiquitinated proteins.</text>
</comment>
<comment type="subcellular location">
    <subcellularLocation>
        <location evidence="1">Cytoplasm</location>
    </subcellularLocation>
</comment>
<comment type="similarity">
    <text evidence="6">Belongs to the DDI1 family.</text>
</comment>